<organism>
    <name type="scientific">Gallus gallus</name>
    <name type="common">Chicken</name>
    <dbReference type="NCBI Taxonomy" id="9031"/>
    <lineage>
        <taxon>Eukaryota</taxon>
        <taxon>Metazoa</taxon>
        <taxon>Chordata</taxon>
        <taxon>Craniata</taxon>
        <taxon>Vertebrata</taxon>
        <taxon>Euteleostomi</taxon>
        <taxon>Archelosauria</taxon>
        <taxon>Archosauria</taxon>
        <taxon>Dinosauria</taxon>
        <taxon>Saurischia</taxon>
        <taxon>Theropoda</taxon>
        <taxon>Coelurosauria</taxon>
        <taxon>Aves</taxon>
        <taxon>Neognathae</taxon>
        <taxon>Galloanserae</taxon>
        <taxon>Galliformes</taxon>
        <taxon>Phasianidae</taxon>
        <taxon>Phasianinae</taxon>
        <taxon>Gallus</taxon>
    </lineage>
</organism>
<proteinExistence type="inferred from homology"/>
<gene>
    <name type="primary">CCNC</name>
</gene>
<reference key="1">
    <citation type="journal article" date="1996" name="Oncogene">
        <title>Alternatively spliced cyclin C mRNA is widely expressed, cell cycle regulated, and encodes a truncated cyclin box.</title>
        <authorList>
            <person name="Li H."/>
            <person name="Lahti J.M."/>
            <person name="Kidd V.J."/>
        </authorList>
    </citation>
    <scope>NUCLEOTIDE SEQUENCE [GENOMIC DNA]</scope>
</reference>
<comment type="function">
    <text evidence="1">Component of the Mediator complex, a coactivator involved in regulated gene transcription of nearly all RNA polymerase II-dependent genes. Mediator functions as a bridge to convey information from gene-specific regulatory proteins to the basal RNA polymerase II transcription machinery. Mediator is recruited to promoters by direct interactions with regulatory proteins and serves as a scaffold for the assembly of a functional preinitiation complex with RNA polymerase II and the general transcription factors. Binds to and activates cyclin-dependent kinase CDK8 that phosphorylates the CTD (C-terminal domain) of the large subunit of RNA polymerase II (RNAp II), which may inhibit the formation of a transcription initiation complex (By similarity).</text>
</comment>
<comment type="subunit">
    <text evidence="1">Component of the Mediator complex. The cylin/CDK pair formed by CCNC/CDK8 also associates with the large subunit of RNA polymerase II (By similarity).</text>
</comment>
<comment type="subcellular location">
    <subcellularLocation>
        <location evidence="3">Nucleus</location>
    </subcellularLocation>
</comment>
<comment type="similarity">
    <text evidence="3">Belongs to the cyclin family. Cyclin C subfamily.</text>
</comment>
<accession>P55168</accession>
<name>CCNC_CHICK</name>
<feature type="chain" id="PRO_0000080423" description="Cyclin-C">
    <location>
        <begin position="1"/>
        <end position="283"/>
    </location>
</feature>
<feature type="domain" description="Cyclin N-terminal">
    <location>
        <begin position="46"/>
        <end position="144"/>
    </location>
</feature>
<feature type="region of interest" description="Disordered" evidence="2">
    <location>
        <begin position="252"/>
        <end position="283"/>
    </location>
</feature>
<feature type="compositionally biased region" description="Polar residues" evidence="2">
    <location>
        <begin position="272"/>
        <end position="283"/>
    </location>
</feature>
<keyword id="KW-0010">Activator</keyword>
<keyword id="KW-0195">Cyclin</keyword>
<keyword id="KW-0539">Nucleus</keyword>
<keyword id="KW-1185">Reference proteome</keyword>
<keyword id="KW-0678">Repressor</keyword>
<keyword id="KW-0804">Transcription</keyword>
<keyword id="KW-0805">Transcription regulation</keyword>
<protein>
    <recommendedName>
        <fullName>Cyclin-C</fullName>
    </recommendedName>
</protein>
<dbReference type="EMBL" id="U40873">
    <property type="protein sequence ID" value="AAB18947.1"/>
    <property type="molecule type" value="Genomic_DNA"/>
</dbReference>
<dbReference type="RefSeq" id="NP_001161237.1">
    <property type="nucleotide sequence ID" value="NM_001167765.2"/>
</dbReference>
<dbReference type="SMR" id="P55168"/>
<dbReference type="FunCoup" id="P55168">
    <property type="interactions" value="2333"/>
</dbReference>
<dbReference type="STRING" id="9031.ENSGALP00000036437"/>
<dbReference type="PaxDb" id="9031-ENSGALP00000036437"/>
<dbReference type="GeneID" id="421791"/>
<dbReference type="KEGG" id="gga:421791"/>
<dbReference type="CTD" id="892"/>
<dbReference type="VEuPathDB" id="HostDB:geneid_421791"/>
<dbReference type="eggNOG" id="KOG0794">
    <property type="taxonomic scope" value="Eukaryota"/>
</dbReference>
<dbReference type="HOGENOM" id="CLU_034754_1_1_1"/>
<dbReference type="InParanoid" id="P55168"/>
<dbReference type="OrthoDB" id="10266018at2759"/>
<dbReference type="PhylomeDB" id="P55168"/>
<dbReference type="Reactome" id="R-GGA-212436">
    <property type="pathway name" value="Generic Transcription Pathway"/>
</dbReference>
<dbReference type="Reactome" id="R-GGA-9841922">
    <property type="pathway name" value="MLL4 and MLL3 complexes regulate expression of PPARG target genes in adipogenesis and hepatic steatosis"/>
</dbReference>
<dbReference type="PRO" id="PR:P55168"/>
<dbReference type="Proteomes" id="UP000000539">
    <property type="component" value="Chromosome 3"/>
</dbReference>
<dbReference type="Bgee" id="ENSGALG00000015471">
    <property type="expression patterns" value="Expressed in spermatocyte and 13 other cell types or tissues"/>
</dbReference>
<dbReference type="GO" id="GO:0016592">
    <property type="term" value="C:mediator complex"/>
    <property type="evidence" value="ECO:0000318"/>
    <property type="project" value="GO_Central"/>
</dbReference>
<dbReference type="GO" id="GO:0005634">
    <property type="term" value="C:nucleus"/>
    <property type="evidence" value="ECO:0000318"/>
    <property type="project" value="GO_Central"/>
</dbReference>
<dbReference type="GO" id="GO:0016538">
    <property type="term" value="F:cyclin-dependent protein serine/threonine kinase regulator activity"/>
    <property type="evidence" value="ECO:0000318"/>
    <property type="project" value="GO_Central"/>
</dbReference>
<dbReference type="GO" id="GO:0045944">
    <property type="term" value="P:positive regulation of transcription by RNA polymerase II"/>
    <property type="evidence" value="ECO:0000318"/>
    <property type="project" value="GO_Central"/>
</dbReference>
<dbReference type="CDD" id="cd20513">
    <property type="entry name" value="CYCLIN_CCNC_rpt1"/>
    <property type="match status" value="1"/>
</dbReference>
<dbReference type="CDD" id="cd20514">
    <property type="entry name" value="CYCLIN_CCNC_rpt2"/>
    <property type="match status" value="1"/>
</dbReference>
<dbReference type="FunFam" id="1.10.472.10:FF:000015">
    <property type="entry name" value="Putative cyclin-c"/>
    <property type="match status" value="1"/>
</dbReference>
<dbReference type="Gene3D" id="1.10.472.10">
    <property type="entry name" value="Cyclin-like"/>
    <property type="match status" value="2"/>
</dbReference>
<dbReference type="InterPro" id="IPR013763">
    <property type="entry name" value="Cyclin-like_dom"/>
</dbReference>
<dbReference type="InterPro" id="IPR036915">
    <property type="entry name" value="Cyclin-like_sf"/>
</dbReference>
<dbReference type="InterPro" id="IPR043198">
    <property type="entry name" value="Cyclin/Ssn8"/>
</dbReference>
<dbReference type="InterPro" id="IPR031658">
    <property type="entry name" value="Cyclin_C_2"/>
</dbReference>
<dbReference type="InterPro" id="IPR006671">
    <property type="entry name" value="Cyclin_N"/>
</dbReference>
<dbReference type="PANTHER" id="PTHR10026">
    <property type="entry name" value="CYCLIN"/>
    <property type="match status" value="1"/>
</dbReference>
<dbReference type="Pfam" id="PF16899">
    <property type="entry name" value="Cyclin_C_2"/>
    <property type="match status" value="1"/>
</dbReference>
<dbReference type="Pfam" id="PF00134">
    <property type="entry name" value="Cyclin_N"/>
    <property type="match status" value="1"/>
</dbReference>
<dbReference type="PIRSF" id="PIRSF028758">
    <property type="entry name" value="Cyclin, C/H/G types"/>
    <property type="match status" value="1"/>
</dbReference>
<dbReference type="SMART" id="SM00385">
    <property type="entry name" value="CYCLIN"/>
    <property type="match status" value="2"/>
</dbReference>
<dbReference type="SUPFAM" id="SSF47954">
    <property type="entry name" value="Cyclin-like"/>
    <property type="match status" value="2"/>
</dbReference>
<sequence>MAGNFWQSSHYLQWILDKQDLLKERQKDLKFLSEEEYWKLQIFFTNVIQALGEHLKLRQQVIATATVYFKRFYARYSLKSIDPVLMAPTCVFLASKVEEFGVVSNTRLISAATSVLKTRFSYAFPKEFPYRMNHILECEFYLLELMDCCLIVYHPYRPLLQYVQDMGQEDMLLPLAWRIVNDTYRTDLCLLYPPFMIALACLHVACVVQQKDARQWFAELSVDMEKILEIIRVILKLYEQWKNFDERKEMATILSKMPKPKPPPNSEGEQGPNGSQNSSYSQS</sequence>
<evidence type="ECO:0000250" key="1"/>
<evidence type="ECO:0000256" key="2">
    <source>
        <dbReference type="SAM" id="MobiDB-lite"/>
    </source>
</evidence>
<evidence type="ECO:0000305" key="3"/>